<accession>Q6C457</accession>
<organism>
    <name type="scientific">Yarrowia lipolytica (strain CLIB 122 / E 150)</name>
    <name type="common">Yeast</name>
    <name type="synonym">Candida lipolytica</name>
    <dbReference type="NCBI Taxonomy" id="284591"/>
    <lineage>
        <taxon>Eukaryota</taxon>
        <taxon>Fungi</taxon>
        <taxon>Dikarya</taxon>
        <taxon>Ascomycota</taxon>
        <taxon>Saccharomycotina</taxon>
        <taxon>Dipodascomycetes</taxon>
        <taxon>Dipodascales</taxon>
        <taxon>Dipodascales incertae sedis</taxon>
        <taxon>Yarrowia</taxon>
    </lineage>
</organism>
<name>UTP10_YARLI</name>
<feature type="chain" id="PRO_0000308514" description="U3 small nucleolar RNA-associated protein 10">
    <location>
        <begin position="1"/>
        <end position="1635"/>
    </location>
</feature>
<feature type="transmembrane region" description="Helical" evidence="2">
    <location>
        <begin position="1141"/>
        <end position="1161"/>
    </location>
</feature>
<feature type="transmembrane region" description="Helical" evidence="2">
    <location>
        <begin position="1288"/>
        <end position="1308"/>
    </location>
</feature>
<feature type="region of interest" description="Disordered" evidence="3">
    <location>
        <begin position="781"/>
        <end position="803"/>
    </location>
</feature>
<reference evidence="5" key="1">
    <citation type="journal article" date="2004" name="Nature">
        <title>Genome evolution in yeasts.</title>
        <authorList>
            <person name="Dujon B."/>
            <person name="Sherman D."/>
            <person name="Fischer G."/>
            <person name="Durrens P."/>
            <person name="Casaregola S."/>
            <person name="Lafontaine I."/>
            <person name="de Montigny J."/>
            <person name="Marck C."/>
            <person name="Neuveglise C."/>
            <person name="Talla E."/>
            <person name="Goffard N."/>
            <person name="Frangeul L."/>
            <person name="Aigle M."/>
            <person name="Anthouard V."/>
            <person name="Babour A."/>
            <person name="Barbe V."/>
            <person name="Barnay S."/>
            <person name="Blanchin S."/>
            <person name="Beckerich J.-M."/>
            <person name="Beyne E."/>
            <person name="Bleykasten C."/>
            <person name="Boisrame A."/>
            <person name="Boyer J."/>
            <person name="Cattolico L."/>
            <person name="Confanioleri F."/>
            <person name="de Daruvar A."/>
            <person name="Despons L."/>
            <person name="Fabre E."/>
            <person name="Fairhead C."/>
            <person name="Ferry-Dumazet H."/>
            <person name="Groppi A."/>
            <person name="Hantraye F."/>
            <person name="Hennequin C."/>
            <person name="Jauniaux N."/>
            <person name="Joyet P."/>
            <person name="Kachouri R."/>
            <person name="Kerrest A."/>
            <person name="Koszul R."/>
            <person name="Lemaire M."/>
            <person name="Lesur I."/>
            <person name="Ma L."/>
            <person name="Muller H."/>
            <person name="Nicaud J.-M."/>
            <person name="Nikolski M."/>
            <person name="Oztas S."/>
            <person name="Ozier-Kalogeropoulos O."/>
            <person name="Pellenz S."/>
            <person name="Potier S."/>
            <person name="Richard G.-F."/>
            <person name="Straub M.-L."/>
            <person name="Suleau A."/>
            <person name="Swennen D."/>
            <person name="Tekaia F."/>
            <person name="Wesolowski-Louvel M."/>
            <person name="Westhof E."/>
            <person name="Wirth B."/>
            <person name="Zeniou-Meyer M."/>
            <person name="Zivanovic Y."/>
            <person name="Bolotin-Fukuhara M."/>
            <person name="Thierry A."/>
            <person name="Bouchier C."/>
            <person name="Caudron B."/>
            <person name="Scarpelli C."/>
            <person name="Gaillardin C."/>
            <person name="Weissenbach J."/>
            <person name="Wincker P."/>
            <person name="Souciet J.-L."/>
        </authorList>
    </citation>
    <scope>NUCLEOTIDE SEQUENCE [LARGE SCALE GENOMIC DNA]</scope>
    <source>
        <strain>CLIB 122 / E 150</strain>
    </source>
</reference>
<gene>
    <name evidence="1" type="primary">UTP10</name>
    <name type="ordered locus">YALI0E29506g</name>
</gene>
<keyword id="KW-0472">Membrane</keyword>
<keyword id="KW-0539">Nucleus</keyword>
<keyword id="KW-1185">Reference proteome</keyword>
<keyword id="KW-0687">Ribonucleoprotein</keyword>
<keyword id="KW-0690">Ribosome biogenesis</keyword>
<keyword id="KW-0698">rRNA processing</keyword>
<keyword id="KW-0812">Transmembrane</keyword>
<keyword id="KW-1133">Transmembrane helix</keyword>
<proteinExistence type="inferred from homology"/>
<sequence length="1635" mass="181746">MSTLSQQLSQLGGGSTVDRTWKLKQHSKSLIYEPQVAQDQDFSFIHAVGVEGLRDLVSLDSRFAQFENNLFSDTSIDVDRYVQTQEQNDLLDKAISAFLSLIGPYLMLSPAVKALEWLVRRFHVNQMNAEQLLLCVLPYYDQDIYLRVADVIIKLPPLFVFLNKSKSAAQNPPRNLLIRAFSADMRLFELITEYIVGQTTTKTSYQRQLSFWSQFAIYGLVADKADPERMLEIYLPALAKLVVTIDTDCQIAAYMVLTVLGNKMPLNKEVFNALVETIAANWTQKAIKSGILCITQMYQQKQEPEVLPTSVMTALNKAGFQPSDVVALSQKYKMALFTLGYCMALLRNPDAANFKGLEEIISNTQFGSNESTFLMRYIVDWALAKETNTSVAALAAPVIAKWVTRGETVPELDQLELKLQTVFTEAAVEEMEVEEIQEDVDVESLVEQAKKAASQTTTYFSTKTSENYAELSKIFVQLIERGYTMDKFVSMFSSDIASLTFFARIWASPSPLLARLAAVEAAKTIITAAGEADFQNLIPYTCIALSDASQRVRKAAASFAEVLKSKQNKKPIWGVEKIYTNDCSYLGSGDVTVLLNALSLEECILDESFVIRQVSDMISKKKGYKSAFSTAVLAYLGSHAVSQEIIAIRTSLLTLVTSSEEPIVPTTKVVEPLYINPPNDLAYITELIRTVTDKTGIKFLESLIKNDSPIYDEVCDIVTQRLVKLWPTLKGDAHLGLFRFFVDLSLDKDVPFDSLDVLAHVDVPTKVFISLLDDCKVEQNTTSMDAPSDESTKRRRRSSSSTVRNLLQGKLHHIAERNLRKVSLVLELLVASKTTDDALLGPLFTQLGEILTLGTDSNLPIDYCQSLLADVLLNIIRANQHDGASIDRDIRVDIVVSAIRTASNAQIQNKYLLLVAELATVAPTLVLHSVMPIFTFMGANTLRQDDDFSVHVIEQTVARIVPCLAGNTDKVDMLLVSFVTAFPHIPQHRRVKLFGELVRALDASGTKDALATLLFLFAQKSAELKTARKTSEVSAIAKFCDSLFKLFDASKQLAVVLPYVTLVQELYAIIATDPKTKEKEKKTRRQIFLQVDKELEVSPIDFLVVLLESRILPLQAGLVQSPEALKIAENVLTVLIESQYPELLNVILSLLPLPLFVTVAGRLGSSVYKTVLARFSSGSIEEEDTKASDTLLESLHSLLKSTTDTGDLVLLLQIVETVASGFPKCSDALLVTCAGEAVAQLKNSDDDVFIQAVSVLSSLCLRLGARMIGLFPATISSVLARDSSDNLIALSVLALFATFIKRLPSFMVSSLPKIFEFALKCPADTDTRKQLFVVCVETMDSRVVLQTLCDSWKFVEGFENARLFADTLDLAVAEADKKQIHSKADSLITLCLEAFDSSLKLEANTAARVQNLFIKCLIAIVLKLNDKTFRPLFVKIVDWNTPERSTLLFKIVCRLQENLKSIVTSYYGYIIDLALEILNKASAITPALQRNILSSLYSSFRFDREEFWNNEERFTKISDALGAQFPYLTKVAPENSKLLIKAVVALCELASEDQKKQLNDMMIKLLRQAPLYGSRCFAALFNNVGEEFLPFLPQLVPQIAELLESEDEKVESAVRAELIPAVEEVLGESLDRYLA</sequence>
<dbReference type="EMBL" id="CR382131">
    <property type="protein sequence ID" value="CAG80159.1"/>
    <property type="molecule type" value="Genomic_DNA"/>
</dbReference>
<dbReference type="RefSeq" id="XP_504555.1">
    <property type="nucleotide sequence ID" value="XM_504555.1"/>
</dbReference>
<dbReference type="SMR" id="Q6C457"/>
<dbReference type="FunCoup" id="Q6C457">
    <property type="interactions" value="1153"/>
</dbReference>
<dbReference type="STRING" id="284591.Q6C457"/>
<dbReference type="EnsemblFungi" id="CAG80159">
    <property type="protein sequence ID" value="CAG80159"/>
    <property type="gene ID" value="YALI0_E29506g"/>
</dbReference>
<dbReference type="VEuPathDB" id="FungiDB:YALI0_E29506g"/>
<dbReference type="HOGENOM" id="CLU_001128_3_1_1"/>
<dbReference type="InParanoid" id="Q6C457"/>
<dbReference type="OMA" id="NDVMWKQ"/>
<dbReference type="OrthoDB" id="120564at4891"/>
<dbReference type="Proteomes" id="UP000001300">
    <property type="component" value="Chromosome E"/>
</dbReference>
<dbReference type="GO" id="GO:0030686">
    <property type="term" value="C:90S preribosome"/>
    <property type="evidence" value="ECO:0000318"/>
    <property type="project" value="GO_Central"/>
</dbReference>
<dbReference type="GO" id="GO:0016020">
    <property type="term" value="C:membrane"/>
    <property type="evidence" value="ECO:0007669"/>
    <property type="project" value="UniProtKB-SubCell"/>
</dbReference>
<dbReference type="GO" id="GO:0032040">
    <property type="term" value="C:small-subunit processome"/>
    <property type="evidence" value="ECO:0000318"/>
    <property type="project" value="GO_Central"/>
</dbReference>
<dbReference type="GO" id="GO:0034455">
    <property type="term" value="C:t-UTP complex"/>
    <property type="evidence" value="ECO:0000318"/>
    <property type="project" value="GO_Central"/>
</dbReference>
<dbReference type="GO" id="GO:0030515">
    <property type="term" value="F:snoRNA binding"/>
    <property type="evidence" value="ECO:0000318"/>
    <property type="project" value="GO_Central"/>
</dbReference>
<dbReference type="GO" id="GO:0000462">
    <property type="term" value="P:maturation of SSU-rRNA from tricistronic rRNA transcript (SSU-rRNA, 5.8S rRNA, LSU-rRNA)"/>
    <property type="evidence" value="ECO:0000318"/>
    <property type="project" value="GO_Central"/>
</dbReference>
<dbReference type="GO" id="GO:0045943">
    <property type="term" value="P:positive regulation of transcription by RNA polymerase I"/>
    <property type="evidence" value="ECO:0000318"/>
    <property type="project" value="GO_Central"/>
</dbReference>
<dbReference type="Gene3D" id="1.25.10.10">
    <property type="entry name" value="Leucine-rich Repeat Variant"/>
    <property type="match status" value="1"/>
</dbReference>
<dbReference type="InterPro" id="IPR011989">
    <property type="entry name" value="ARM-like"/>
</dbReference>
<dbReference type="InterPro" id="IPR016024">
    <property type="entry name" value="ARM-type_fold"/>
</dbReference>
<dbReference type="InterPro" id="IPR012954">
    <property type="entry name" value="BP28_C_dom"/>
</dbReference>
<dbReference type="InterPro" id="IPR056473">
    <property type="entry name" value="HEAT_Utp10/HEAT1"/>
</dbReference>
<dbReference type="InterPro" id="IPR022125">
    <property type="entry name" value="U3snoRNP10_N"/>
</dbReference>
<dbReference type="InterPro" id="IPR040191">
    <property type="entry name" value="UTP10"/>
</dbReference>
<dbReference type="PANTHER" id="PTHR13457">
    <property type="entry name" value="BAP28"/>
    <property type="match status" value="1"/>
</dbReference>
<dbReference type="PANTHER" id="PTHR13457:SF1">
    <property type="entry name" value="HEAT REPEAT-CONTAINING PROTEIN 1"/>
    <property type="match status" value="1"/>
</dbReference>
<dbReference type="Pfam" id="PF08146">
    <property type="entry name" value="BP28CT"/>
    <property type="match status" value="1"/>
</dbReference>
<dbReference type="Pfam" id="PF23243">
    <property type="entry name" value="HEAT_HEATR1"/>
    <property type="match status" value="1"/>
</dbReference>
<dbReference type="Pfam" id="PF12397">
    <property type="entry name" value="U3snoRNP10"/>
    <property type="match status" value="1"/>
</dbReference>
<dbReference type="SMART" id="SM01036">
    <property type="entry name" value="BP28CT"/>
    <property type="match status" value="1"/>
</dbReference>
<dbReference type="SUPFAM" id="SSF48371">
    <property type="entry name" value="ARM repeat"/>
    <property type="match status" value="2"/>
</dbReference>
<evidence type="ECO:0000250" key="1">
    <source>
        <dbReference type="UniProtKB" id="P42945"/>
    </source>
</evidence>
<evidence type="ECO:0000255" key="2"/>
<evidence type="ECO:0000256" key="3">
    <source>
        <dbReference type="SAM" id="MobiDB-lite"/>
    </source>
</evidence>
<evidence type="ECO:0000305" key="4"/>
<evidence type="ECO:0000312" key="5">
    <source>
        <dbReference type="EMBL" id="CAG80159.1"/>
    </source>
</evidence>
<protein>
    <recommendedName>
        <fullName>U3 small nucleolar RNA-associated protein 10</fullName>
    </recommendedName>
</protein>
<comment type="function">
    <text evidence="1">Involved in nucleolar processing of pre-18S ribosomal RNA. Involved in ribosome biosynthesis (By similarity).</text>
</comment>
<comment type="subunit">
    <text evidence="1">Component of the ribosomal small subunit (SSU) processome.</text>
</comment>
<comment type="subcellular location">
    <subcellularLocation>
        <location evidence="1 2">Nucleus</location>
        <location evidence="1 2">Nucleolus</location>
    </subcellularLocation>
    <subcellularLocation>
        <location evidence="2">Membrane</location>
        <topology evidence="2">Multi-pass membrane protein</topology>
    </subcellularLocation>
</comment>
<comment type="similarity">
    <text evidence="4">Belongs to the HEATR1/UTP10 family.</text>
</comment>